<accession>B1IZB8</accession>
<organism>
    <name type="scientific">Escherichia coli (strain ATCC 8739 / DSM 1576 / NBRC 3972 / NCIMB 8545 / WDCM 00012 / Crooks)</name>
    <dbReference type="NCBI Taxonomy" id="481805"/>
    <lineage>
        <taxon>Bacteria</taxon>
        <taxon>Pseudomonadati</taxon>
        <taxon>Pseudomonadota</taxon>
        <taxon>Gammaproteobacteria</taxon>
        <taxon>Enterobacterales</taxon>
        <taxon>Enterobacteriaceae</taxon>
        <taxon>Escherichia</taxon>
    </lineage>
</organism>
<gene>
    <name evidence="2" type="primary">aes</name>
    <name type="ordered locus">EcolC_3140</name>
</gene>
<protein>
    <recommendedName>
        <fullName evidence="2">Acetyl esterase</fullName>
        <ecNumber evidence="2">3.1.1.-</ecNumber>
    </recommendedName>
</protein>
<feature type="chain" id="PRO_1000188985" description="Acetyl esterase">
    <location>
        <begin position="1"/>
        <end position="319"/>
    </location>
</feature>
<feature type="short sequence motif" description="Involved in the stabilization of the negatively charged intermediate by the formation of the oxyanion hole" evidence="1">
    <location>
        <begin position="91"/>
        <end position="93"/>
    </location>
</feature>
<feature type="active site" evidence="2">
    <location>
        <position position="165"/>
    </location>
</feature>
<feature type="active site" evidence="2">
    <location>
        <position position="262"/>
    </location>
</feature>
<feature type="active site" evidence="2">
    <location>
        <position position="292"/>
    </location>
</feature>
<reference key="1">
    <citation type="submission" date="2008-02" db="EMBL/GenBank/DDBJ databases">
        <title>Complete sequence of Escherichia coli C str. ATCC 8739.</title>
        <authorList>
            <person name="Copeland A."/>
            <person name="Lucas S."/>
            <person name="Lapidus A."/>
            <person name="Glavina del Rio T."/>
            <person name="Dalin E."/>
            <person name="Tice H."/>
            <person name="Bruce D."/>
            <person name="Goodwin L."/>
            <person name="Pitluck S."/>
            <person name="Kiss H."/>
            <person name="Brettin T."/>
            <person name="Detter J.C."/>
            <person name="Han C."/>
            <person name="Kuske C.R."/>
            <person name="Schmutz J."/>
            <person name="Larimer F."/>
            <person name="Land M."/>
            <person name="Hauser L."/>
            <person name="Kyrpides N."/>
            <person name="Mikhailova N."/>
            <person name="Ingram L."/>
            <person name="Richardson P."/>
        </authorList>
    </citation>
    <scope>NUCLEOTIDE SEQUENCE [LARGE SCALE GENOMIC DNA]</scope>
    <source>
        <strain>ATCC 8739 / DSM 1576 / NBRC 3972 / NCIMB 8545 / WDCM 00012 / Crooks</strain>
    </source>
</reference>
<proteinExistence type="inferred from homology"/>
<name>AES_ECOLC</name>
<comment type="function">
    <text evidence="2">Displays esterase activity towards short chain fatty esters (acyl chain length of up to 8 carbons). Able to hydrolyze triacetylglycerol (triacetin) and tributyrylglycerol (tributyrin), but not trioleylglycerol (triolein) or cholesterol oleate. Negatively regulates MalT activity by antagonizing maltotriose binding. Inhibits MelA galactosidase activity.</text>
</comment>
<comment type="subunit">
    <text evidence="2">Homodimer. Interacts with MalT and MelA.</text>
</comment>
<comment type="subcellular location">
    <subcellularLocation>
        <location evidence="2">Cytoplasm</location>
    </subcellularLocation>
</comment>
<comment type="similarity">
    <text evidence="2">Belongs to the 'GDXG' lipolytic enzyme family.</text>
</comment>
<sequence length="319" mass="35936">MKPENKSPVLDLISAGMKTVVNTLQPDLPPWPATGTIAEQRQYYTLERRFWNAGAPEMATRAYMVPTKYGQVETRLFCPQPDSPATLFYLHGGGFILGNLDTHDRIMRVLASYSQCTVIGIDYTLSPEARFPQAIEEIVAACCYFHQQAEDYQINMSRIGFAGDSAGAMLALASALWLRDKQIDCGKIAGVLLWYGLYGLRDSVTRRLLGGVWDGLTQQDLQMYEEAYLSNDADRESPYYCLFNNDLTREVPPCFIAGAEFDPLLDDSRLLYQTLAAHQQPCEFKLYPGTLHAFLHYSRMMKTADEALRDGAQFFTAQL</sequence>
<dbReference type="EC" id="3.1.1.-" evidence="2"/>
<dbReference type="EMBL" id="CP000946">
    <property type="protein sequence ID" value="ACA78763.1"/>
    <property type="molecule type" value="Genomic_DNA"/>
</dbReference>
<dbReference type="RefSeq" id="WP_000801866.1">
    <property type="nucleotide sequence ID" value="NC_010468.1"/>
</dbReference>
<dbReference type="SMR" id="B1IZB8"/>
<dbReference type="ESTHER" id="ecoli-Aes">
    <property type="family name" value="Acetyl_esterase"/>
</dbReference>
<dbReference type="MEROPS" id="S09.A47"/>
<dbReference type="KEGG" id="ecl:EcolC_3140"/>
<dbReference type="HOGENOM" id="CLU_012494_6_4_6"/>
<dbReference type="GO" id="GO:0005737">
    <property type="term" value="C:cytoplasm"/>
    <property type="evidence" value="ECO:0007669"/>
    <property type="project" value="UniProtKB-SubCell"/>
</dbReference>
<dbReference type="GO" id="GO:0052689">
    <property type="term" value="F:carboxylic ester hydrolase activity"/>
    <property type="evidence" value="ECO:0007669"/>
    <property type="project" value="UniProtKB-UniRule"/>
</dbReference>
<dbReference type="FunFam" id="3.40.50.1820:FF:000035">
    <property type="entry name" value="Acetyl esterase"/>
    <property type="match status" value="1"/>
</dbReference>
<dbReference type="Gene3D" id="3.40.50.1820">
    <property type="entry name" value="alpha/beta hydrolase"/>
    <property type="match status" value="1"/>
</dbReference>
<dbReference type="HAMAP" id="MF_01958">
    <property type="entry name" value="Acetyl_esterase"/>
    <property type="match status" value="1"/>
</dbReference>
<dbReference type="InterPro" id="IPR013094">
    <property type="entry name" value="AB_hydrolase_3"/>
</dbReference>
<dbReference type="InterPro" id="IPR029058">
    <property type="entry name" value="AB_hydrolase_fold"/>
</dbReference>
<dbReference type="InterPro" id="IPR023508">
    <property type="entry name" value="Acetyl_esterase"/>
</dbReference>
<dbReference type="InterPro" id="IPR050300">
    <property type="entry name" value="GDXG_lipolytic_enzyme"/>
</dbReference>
<dbReference type="InterPro" id="IPR002168">
    <property type="entry name" value="Lipase_GDXG_HIS_AS"/>
</dbReference>
<dbReference type="InterPro" id="IPR033140">
    <property type="entry name" value="Lipase_GDXG_put_SER_AS"/>
</dbReference>
<dbReference type="NCBIfam" id="NF007547">
    <property type="entry name" value="PRK10162.1"/>
    <property type="match status" value="1"/>
</dbReference>
<dbReference type="PANTHER" id="PTHR48081">
    <property type="entry name" value="AB HYDROLASE SUPERFAMILY PROTEIN C4A8.06C"/>
    <property type="match status" value="1"/>
</dbReference>
<dbReference type="PANTHER" id="PTHR48081:SF8">
    <property type="entry name" value="ALPHA_BETA HYDROLASE FOLD-3 DOMAIN-CONTAINING PROTEIN-RELATED"/>
    <property type="match status" value="1"/>
</dbReference>
<dbReference type="Pfam" id="PF07859">
    <property type="entry name" value="Abhydrolase_3"/>
    <property type="match status" value="1"/>
</dbReference>
<dbReference type="SUPFAM" id="SSF53474">
    <property type="entry name" value="alpha/beta-Hydrolases"/>
    <property type="match status" value="1"/>
</dbReference>
<dbReference type="PROSITE" id="PS01173">
    <property type="entry name" value="LIPASE_GDXG_HIS"/>
    <property type="match status" value="1"/>
</dbReference>
<dbReference type="PROSITE" id="PS01174">
    <property type="entry name" value="LIPASE_GDXG_SER"/>
    <property type="match status" value="1"/>
</dbReference>
<keyword id="KW-0963">Cytoplasm</keyword>
<keyword id="KW-0378">Hydrolase</keyword>
<keyword id="KW-0719">Serine esterase</keyword>
<evidence type="ECO:0000250" key="1">
    <source>
        <dbReference type="UniProtKB" id="Q5NUF3"/>
    </source>
</evidence>
<evidence type="ECO:0000255" key="2">
    <source>
        <dbReference type="HAMAP-Rule" id="MF_01958"/>
    </source>
</evidence>